<accession>B0KKY2</accession>
<comment type="function">
    <text evidence="1">Binds as a heterodimer with protein bS6 to the central domain of the 16S rRNA, where it helps stabilize the platform of the 30S subunit.</text>
</comment>
<comment type="subunit">
    <text evidence="1">Part of the 30S ribosomal subunit. Forms a tight heterodimer with protein bS6.</text>
</comment>
<comment type="similarity">
    <text evidence="1">Belongs to the bacterial ribosomal protein bS18 family.</text>
</comment>
<gene>
    <name evidence="1" type="primary">rpsR</name>
    <name type="ordered locus">PputGB1_4933</name>
</gene>
<dbReference type="EMBL" id="CP000926">
    <property type="protein sequence ID" value="ABZ00818.1"/>
    <property type="molecule type" value="Genomic_DNA"/>
</dbReference>
<dbReference type="RefSeq" id="WP_003249563.1">
    <property type="nucleotide sequence ID" value="NC_010322.1"/>
</dbReference>
<dbReference type="SMR" id="B0KKY2"/>
<dbReference type="GeneID" id="97170237"/>
<dbReference type="KEGG" id="ppg:PputGB1_4933"/>
<dbReference type="eggNOG" id="COG0238">
    <property type="taxonomic scope" value="Bacteria"/>
</dbReference>
<dbReference type="HOGENOM" id="CLU_148710_2_3_6"/>
<dbReference type="Proteomes" id="UP000002157">
    <property type="component" value="Chromosome"/>
</dbReference>
<dbReference type="GO" id="GO:0022627">
    <property type="term" value="C:cytosolic small ribosomal subunit"/>
    <property type="evidence" value="ECO:0007669"/>
    <property type="project" value="TreeGrafter"/>
</dbReference>
<dbReference type="GO" id="GO:0070181">
    <property type="term" value="F:small ribosomal subunit rRNA binding"/>
    <property type="evidence" value="ECO:0007669"/>
    <property type="project" value="TreeGrafter"/>
</dbReference>
<dbReference type="GO" id="GO:0003735">
    <property type="term" value="F:structural constituent of ribosome"/>
    <property type="evidence" value="ECO:0007669"/>
    <property type="project" value="InterPro"/>
</dbReference>
<dbReference type="GO" id="GO:0006412">
    <property type="term" value="P:translation"/>
    <property type="evidence" value="ECO:0007669"/>
    <property type="project" value="UniProtKB-UniRule"/>
</dbReference>
<dbReference type="FunFam" id="4.10.640.10:FF:000001">
    <property type="entry name" value="30S ribosomal protein S18"/>
    <property type="match status" value="1"/>
</dbReference>
<dbReference type="Gene3D" id="4.10.640.10">
    <property type="entry name" value="Ribosomal protein S18"/>
    <property type="match status" value="1"/>
</dbReference>
<dbReference type="HAMAP" id="MF_00270">
    <property type="entry name" value="Ribosomal_bS18"/>
    <property type="match status" value="1"/>
</dbReference>
<dbReference type="InterPro" id="IPR001648">
    <property type="entry name" value="Ribosomal_bS18"/>
</dbReference>
<dbReference type="InterPro" id="IPR018275">
    <property type="entry name" value="Ribosomal_bS18_CS"/>
</dbReference>
<dbReference type="InterPro" id="IPR036870">
    <property type="entry name" value="Ribosomal_bS18_sf"/>
</dbReference>
<dbReference type="NCBIfam" id="TIGR00165">
    <property type="entry name" value="S18"/>
    <property type="match status" value="1"/>
</dbReference>
<dbReference type="PANTHER" id="PTHR13479">
    <property type="entry name" value="30S RIBOSOMAL PROTEIN S18"/>
    <property type="match status" value="1"/>
</dbReference>
<dbReference type="PANTHER" id="PTHR13479:SF40">
    <property type="entry name" value="SMALL RIBOSOMAL SUBUNIT PROTEIN BS18M"/>
    <property type="match status" value="1"/>
</dbReference>
<dbReference type="Pfam" id="PF01084">
    <property type="entry name" value="Ribosomal_S18"/>
    <property type="match status" value="1"/>
</dbReference>
<dbReference type="PRINTS" id="PR00974">
    <property type="entry name" value="RIBOSOMALS18"/>
</dbReference>
<dbReference type="SUPFAM" id="SSF46911">
    <property type="entry name" value="Ribosomal protein S18"/>
    <property type="match status" value="1"/>
</dbReference>
<dbReference type="PROSITE" id="PS00057">
    <property type="entry name" value="RIBOSOMAL_S18"/>
    <property type="match status" value="1"/>
</dbReference>
<feature type="chain" id="PRO_1000078708" description="Small ribosomal subunit protein bS18">
    <location>
        <begin position="1"/>
        <end position="76"/>
    </location>
</feature>
<reference key="1">
    <citation type="submission" date="2008-01" db="EMBL/GenBank/DDBJ databases">
        <title>Complete sequence of Pseudomonas putida GB-1.</title>
        <authorList>
            <consortium name="US DOE Joint Genome Institute"/>
            <person name="Copeland A."/>
            <person name="Lucas S."/>
            <person name="Lapidus A."/>
            <person name="Barry K."/>
            <person name="Glavina del Rio T."/>
            <person name="Dalin E."/>
            <person name="Tice H."/>
            <person name="Pitluck S."/>
            <person name="Bruce D."/>
            <person name="Goodwin L."/>
            <person name="Chertkov O."/>
            <person name="Brettin T."/>
            <person name="Detter J.C."/>
            <person name="Han C."/>
            <person name="Kuske C.R."/>
            <person name="Schmutz J."/>
            <person name="Larimer F."/>
            <person name="Land M."/>
            <person name="Hauser L."/>
            <person name="Kyrpides N."/>
            <person name="Kim E."/>
            <person name="McCarthy J.K."/>
            <person name="Richardson P."/>
        </authorList>
    </citation>
    <scope>NUCLEOTIDE SEQUENCE [LARGE SCALE GENOMIC DNA]</scope>
    <source>
        <strain>GB-1</strain>
    </source>
</reference>
<name>RS18_PSEPG</name>
<organism>
    <name type="scientific">Pseudomonas putida (strain GB-1)</name>
    <dbReference type="NCBI Taxonomy" id="76869"/>
    <lineage>
        <taxon>Bacteria</taxon>
        <taxon>Pseudomonadati</taxon>
        <taxon>Pseudomonadota</taxon>
        <taxon>Gammaproteobacteria</taxon>
        <taxon>Pseudomonadales</taxon>
        <taxon>Pseudomonadaceae</taxon>
        <taxon>Pseudomonas</taxon>
    </lineage>
</organism>
<keyword id="KW-0687">Ribonucleoprotein</keyword>
<keyword id="KW-0689">Ribosomal protein</keyword>
<keyword id="KW-0694">RNA-binding</keyword>
<keyword id="KW-0699">rRNA-binding</keyword>
<proteinExistence type="inferred from homology"/>
<protein>
    <recommendedName>
        <fullName evidence="1">Small ribosomal subunit protein bS18</fullName>
    </recommendedName>
    <alternativeName>
        <fullName evidence="2">30S ribosomal protein S18</fullName>
    </alternativeName>
</protein>
<evidence type="ECO:0000255" key="1">
    <source>
        <dbReference type="HAMAP-Rule" id="MF_00270"/>
    </source>
</evidence>
<evidence type="ECO:0000305" key="2"/>
<sequence>MARFFRRRKFCRFTAEDVKEIDFKDLNTLKAYVSETGKIVPSRITGTKARYQRQLATAIKRARFLALLPYTDSHGR</sequence>